<feature type="chain" id="PRO_0000372758" description="UPF0741 protein SAUSA300_0575">
    <location>
        <begin position="1"/>
        <end position="113"/>
    </location>
</feature>
<feature type="region of interest" description="Disordered" evidence="2">
    <location>
        <begin position="69"/>
        <end position="113"/>
    </location>
</feature>
<feature type="coiled-coil region" evidence="1">
    <location>
        <begin position="79"/>
        <end position="113"/>
    </location>
</feature>
<feature type="compositionally biased region" description="Basic residues" evidence="2">
    <location>
        <begin position="85"/>
        <end position="95"/>
    </location>
</feature>
<feature type="compositionally biased region" description="Basic and acidic residues" evidence="2">
    <location>
        <begin position="96"/>
        <end position="113"/>
    </location>
</feature>
<keyword id="KW-0175">Coiled coil</keyword>
<dbReference type="EMBL" id="CP000255">
    <property type="protein sequence ID" value="ABD22223.1"/>
    <property type="molecule type" value="Genomic_DNA"/>
</dbReference>
<dbReference type="RefSeq" id="WP_000798968.1">
    <property type="nucleotide sequence ID" value="NZ_CP027476.1"/>
</dbReference>
<dbReference type="SMR" id="Q2FJ50"/>
<dbReference type="KEGG" id="saa:SAUSA300_0575"/>
<dbReference type="HOGENOM" id="CLU_2156795_0_0_9"/>
<dbReference type="OMA" id="EIGCQSY"/>
<dbReference type="Proteomes" id="UP000001939">
    <property type="component" value="Chromosome"/>
</dbReference>
<dbReference type="HAMAP" id="MF_01863">
    <property type="entry name" value="UPF0741"/>
    <property type="match status" value="1"/>
</dbReference>
<dbReference type="InterPro" id="IPR009910">
    <property type="entry name" value="DUF1450"/>
</dbReference>
<dbReference type="InterPro" id="IPR020880">
    <property type="entry name" value="UPF0741"/>
</dbReference>
<dbReference type="Pfam" id="PF07293">
    <property type="entry name" value="DUF1450"/>
    <property type="match status" value="1"/>
</dbReference>
<comment type="similarity">
    <text evidence="1">Belongs to the UPF0741 family.</text>
</comment>
<evidence type="ECO:0000255" key="1">
    <source>
        <dbReference type="HAMAP-Rule" id="MF_01863"/>
    </source>
</evidence>
<evidence type="ECO:0000256" key="2">
    <source>
        <dbReference type="SAM" id="MobiDB-lite"/>
    </source>
</evidence>
<gene>
    <name type="ordered locus">SAUSA300_0575</name>
</gene>
<reference key="1">
    <citation type="journal article" date="2006" name="Lancet">
        <title>Complete genome sequence of USA300, an epidemic clone of community-acquired meticillin-resistant Staphylococcus aureus.</title>
        <authorList>
            <person name="Diep B.A."/>
            <person name="Gill S.R."/>
            <person name="Chang R.F."/>
            <person name="Phan T.H."/>
            <person name="Chen J.H."/>
            <person name="Davidson M.G."/>
            <person name="Lin F."/>
            <person name="Lin J."/>
            <person name="Carleton H.A."/>
            <person name="Mongodin E.F."/>
            <person name="Sensabaugh G.F."/>
            <person name="Perdreau-Remington F."/>
        </authorList>
    </citation>
    <scope>NUCLEOTIDE SEQUENCE [LARGE SCALE GENOMIC DNA]</scope>
    <source>
        <strain>USA300</strain>
    </source>
</reference>
<accession>Q2FJ50</accession>
<organism>
    <name type="scientific">Staphylococcus aureus (strain USA300)</name>
    <dbReference type="NCBI Taxonomy" id="367830"/>
    <lineage>
        <taxon>Bacteria</taxon>
        <taxon>Bacillati</taxon>
        <taxon>Bacillota</taxon>
        <taxon>Bacilli</taxon>
        <taxon>Bacillales</taxon>
        <taxon>Staphylococcaceae</taxon>
        <taxon>Staphylococcus</taxon>
    </lineage>
</organism>
<protein>
    <recommendedName>
        <fullName evidence="1">UPF0741 protein SAUSA300_0575</fullName>
    </recommendedName>
</protein>
<proteinExistence type="inferred from homology"/>
<sequence length="113" mass="13506">MKNTFLICDECQAVNIRTLQKKLEKLDPDAEIVIGCQSYCGPGRRKTFTFVNNRPLAALTEEELIEKVSQQLKKPRDPEEEERLRKRHEERKRRKVEQDRKLKEKLEKRKAQQ</sequence>
<name>Y575_STAA3</name>